<keyword id="KW-0042">Antenna complex</keyword>
<keyword id="KW-0076">Bacteriochlorophyll</keyword>
<keyword id="KW-0997">Cell inner membrane</keyword>
<keyword id="KW-1003">Cell membrane</keyword>
<keyword id="KW-0148">Chlorophyll</keyword>
<keyword id="KW-0157">Chromophore</keyword>
<keyword id="KW-0903">Direct protein sequencing</keyword>
<keyword id="KW-0437">Light-harvesting polypeptide</keyword>
<keyword id="KW-0460">Magnesium</keyword>
<keyword id="KW-0472">Membrane</keyword>
<keyword id="KW-0479">Metal-binding</keyword>
<keyword id="KW-0812">Transmembrane</keyword>
<keyword id="KW-1133">Transmembrane helix</keyword>
<reference key="1">
    <citation type="journal article" date="1996" name="Eur. J. Biochem.">
        <title>The antenna complexes of the purple non-sulfur photosynthetic bacterium Rhodocyclus tenuis. Structural and spectral characterization.</title>
        <authorList>
            <person name="Hu Q."/>
            <person name="Brunisholz R.A."/>
            <person name="Frank G."/>
            <person name="Zuber H."/>
        </authorList>
    </citation>
    <scope>PROTEIN SEQUENCE</scope>
    <source>
        <strain>ATCC 25093 / DSM 109 / 2761</strain>
    </source>
</reference>
<name>LHA1_RHOTE</name>
<proteinExistence type="evidence at protein level"/>
<sequence>SAPAQWKLWLVMDPRTVMIGTAAWLGVLALLIHFLLLGTERFNWIDTGLKEQKATAAAQAAITPAPVTAAAK</sequence>
<feature type="chain" id="PRO_0000099807" description="Light-harvesting polypeptide B-885 alpha-1 chain">
    <location>
        <begin position="1"/>
        <end position="72"/>
    </location>
</feature>
<feature type="topological domain" description="Cytoplasmic" evidence="1">
    <location>
        <begin position="1"/>
        <end position="16"/>
    </location>
</feature>
<feature type="transmembrane region" description="Helical" evidence="1">
    <location>
        <begin position="17"/>
        <end position="37"/>
    </location>
</feature>
<feature type="topological domain" description="Periplasmic" evidence="1">
    <location>
        <begin position="38"/>
        <end position="72"/>
    </location>
</feature>
<feature type="binding site" description="axial binding residue" evidence="1">
    <location>
        <position position="33"/>
    </location>
    <ligand>
        <name>a bacteriochlorophyll</name>
        <dbReference type="ChEBI" id="CHEBI:38201"/>
    </ligand>
    <ligandPart>
        <name>Mg</name>
        <dbReference type="ChEBI" id="CHEBI:25107"/>
    </ligandPart>
</feature>
<dbReference type="PIR" id="S68883">
    <property type="entry name" value="S68883"/>
</dbReference>
<dbReference type="SMR" id="P80588"/>
<dbReference type="GO" id="GO:0019866">
    <property type="term" value="C:organelle inner membrane"/>
    <property type="evidence" value="ECO:0007669"/>
    <property type="project" value="InterPro"/>
</dbReference>
<dbReference type="GO" id="GO:0005886">
    <property type="term" value="C:plasma membrane"/>
    <property type="evidence" value="ECO:0007669"/>
    <property type="project" value="UniProtKB-SubCell"/>
</dbReference>
<dbReference type="GO" id="GO:0030077">
    <property type="term" value="C:plasma membrane light-harvesting complex"/>
    <property type="evidence" value="ECO:0007669"/>
    <property type="project" value="InterPro"/>
</dbReference>
<dbReference type="GO" id="GO:0042314">
    <property type="term" value="F:bacteriochlorophyll binding"/>
    <property type="evidence" value="ECO:0007669"/>
    <property type="project" value="UniProtKB-KW"/>
</dbReference>
<dbReference type="GO" id="GO:0045156">
    <property type="term" value="F:electron transporter, transferring electrons within the cyclic electron transport pathway of photosynthesis activity"/>
    <property type="evidence" value="ECO:0007669"/>
    <property type="project" value="InterPro"/>
</dbReference>
<dbReference type="GO" id="GO:0046872">
    <property type="term" value="F:metal ion binding"/>
    <property type="evidence" value="ECO:0007669"/>
    <property type="project" value="UniProtKB-KW"/>
</dbReference>
<dbReference type="GO" id="GO:0019684">
    <property type="term" value="P:photosynthesis, light reaction"/>
    <property type="evidence" value="ECO:0007669"/>
    <property type="project" value="InterPro"/>
</dbReference>
<dbReference type="Gene3D" id="4.10.220.20">
    <property type="entry name" value="Light-harvesting complex"/>
    <property type="match status" value="1"/>
</dbReference>
<dbReference type="InterPro" id="IPR000066">
    <property type="entry name" value="Antenna_a/b"/>
</dbReference>
<dbReference type="InterPro" id="IPR018332">
    <property type="entry name" value="Antenna_alpha"/>
</dbReference>
<dbReference type="InterPro" id="IPR002361">
    <property type="entry name" value="Antenna_alpha_CS"/>
</dbReference>
<dbReference type="InterPro" id="IPR035889">
    <property type="entry name" value="Light-harvesting_complex"/>
</dbReference>
<dbReference type="NCBIfam" id="NF040861">
    <property type="entry name" value="pufA_517_ASD"/>
    <property type="match status" value="1"/>
</dbReference>
<dbReference type="Pfam" id="PF00556">
    <property type="entry name" value="LHC"/>
    <property type="match status" value="1"/>
</dbReference>
<dbReference type="PRINTS" id="PR00673">
    <property type="entry name" value="LIGHTHARVSTA"/>
</dbReference>
<dbReference type="SUPFAM" id="SSF56918">
    <property type="entry name" value="Light-harvesting complex subunits"/>
    <property type="match status" value="1"/>
</dbReference>
<dbReference type="PROSITE" id="PS00968">
    <property type="entry name" value="ANTENNA_COMP_ALPHA"/>
    <property type="match status" value="1"/>
</dbReference>
<evidence type="ECO:0000255" key="1"/>
<evidence type="ECO:0000305" key="2"/>
<organism>
    <name type="scientific">Rhodocyclus tenuis</name>
    <name type="common">Rhodospirillum tenue</name>
    <dbReference type="NCBI Taxonomy" id="1066"/>
    <lineage>
        <taxon>Bacteria</taxon>
        <taxon>Pseudomonadati</taxon>
        <taxon>Pseudomonadota</taxon>
        <taxon>Betaproteobacteria</taxon>
        <taxon>Rhodocyclales</taxon>
        <taxon>Rhodocyclaceae</taxon>
        <taxon>Rhodocyclus</taxon>
    </lineage>
</organism>
<protein>
    <recommendedName>
        <fullName>Light-harvesting polypeptide B-885 alpha-1 chain</fullName>
        <shortName>LH-1</shortName>
    </recommendedName>
    <alternativeName>
        <fullName>Antenna pigment polypeptide alpha-1 chain</fullName>
    </alternativeName>
</protein>
<accession>P80588</accession>
<comment type="function">
    <text>Antenna complexes are light-harvesting systems, which transfer the excitation energy to the reaction centers.</text>
</comment>
<comment type="subunit">
    <text>The core complex is formed by different alpha and beta chains, binding bacteriochlorophyll molecules, and arranged most probably in tetrameric structures disposed around the reaction center. The non-pigmented gamma chains may constitute additional components.</text>
</comment>
<comment type="subcellular location">
    <subcellularLocation>
        <location>Cell inner membrane</location>
        <topology>Single-pass type II membrane protein</topology>
    </subcellularLocation>
</comment>
<comment type="similarity">
    <text evidence="2">Belongs to the antenna complex alpha subunit family.</text>
</comment>